<name>PGK_CORK4</name>
<reference key="1">
    <citation type="journal article" date="2008" name="J. Biotechnol.">
        <title>Ultrafast pyrosequencing of Corynebacterium kroppenstedtii DSM44385 revealed insights into the physiology of a lipophilic corynebacterium that lacks mycolic acids.</title>
        <authorList>
            <person name="Tauch A."/>
            <person name="Schneider J."/>
            <person name="Szczepanowski R."/>
            <person name="Tilker A."/>
            <person name="Viehoever P."/>
            <person name="Gartemann K.-H."/>
            <person name="Arnold W."/>
            <person name="Blom J."/>
            <person name="Brinkrolf K."/>
            <person name="Brune I."/>
            <person name="Goetker S."/>
            <person name="Weisshaar B."/>
            <person name="Goesmann A."/>
            <person name="Droege M."/>
            <person name="Puehler A."/>
        </authorList>
    </citation>
    <scope>NUCLEOTIDE SEQUENCE [LARGE SCALE GENOMIC DNA]</scope>
    <source>
        <strain>DSM 44385 / JCM 11950 / CIP 105744 / CCUG 35717</strain>
    </source>
</reference>
<feature type="chain" id="PRO_1000203330" description="Phosphoglycerate kinase">
    <location>
        <begin position="1"/>
        <end position="403"/>
    </location>
</feature>
<feature type="binding site" evidence="1">
    <location>
        <begin position="24"/>
        <end position="26"/>
    </location>
    <ligand>
        <name>substrate</name>
    </ligand>
</feature>
<feature type="binding site" evidence="1">
    <location>
        <position position="39"/>
    </location>
    <ligand>
        <name>substrate</name>
    </ligand>
</feature>
<feature type="binding site" evidence="1">
    <location>
        <begin position="62"/>
        <end position="65"/>
    </location>
    <ligand>
        <name>substrate</name>
    </ligand>
</feature>
<feature type="binding site" evidence="1">
    <location>
        <position position="121"/>
    </location>
    <ligand>
        <name>substrate</name>
    </ligand>
</feature>
<feature type="binding site" evidence="1">
    <location>
        <position position="161"/>
    </location>
    <ligand>
        <name>substrate</name>
    </ligand>
</feature>
<feature type="binding site" evidence="1">
    <location>
        <position position="211"/>
    </location>
    <ligand>
        <name>ATP</name>
        <dbReference type="ChEBI" id="CHEBI:30616"/>
    </ligand>
</feature>
<feature type="binding site" evidence="1">
    <location>
        <position position="299"/>
    </location>
    <ligand>
        <name>ATP</name>
        <dbReference type="ChEBI" id="CHEBI:30616"/>
    </ligand>
</feature>
<feature type="binding site" evidence="1">
    <location>
        <position position="330"/>
    </location>
    <ligand>
        <name>ATP</name>
        <dbReference type="ChEBI" id="CHEBI:30616"/>
    </ligand>
</feature>
<feature type="binding site" evidence="1">
    <location>
        <begin position="359"/>
        <end position="362"/>
    </location>
    <ligand>
        <name>ATP</name>
        <dbReference type="ChEBI" id="CHEBI:30616"/>
    </ligand>
</feature>
<dbReference type="EC" id="2.7.2.3" evidence="1"/>
<dbReference type="EMBL" id="CP001620">
    <property type="protein sequence ID" value="ACR17721.1"/>
    <property type="molecule type" value="Genomic_DNA"/>
</dbReference>
<dbReference type="RefSeq" id="WP_012731608.1">
    <property type="nucleotide sequence ID" value="NC_012704.1"/>
</dbReference>
<dbReference type="SMR" id="C4LIR6"/>
<dbReference type="STRING" id="645127.ckrop_0968"/>
<dbReference type="KEGG" id="ckp:ckrop_0968"/>
<dbReference type="eggNOG" id="COG0126">
    <property type="taxonomic scope" value="Bacteria"/>
</dbReference>
<dbReference type="HOGENOM" id="CLU_025427_0_2_11"/>
<dbReference type="OrthoDB" id="9808460at2"/>
<dbReference type="UniPathway" id="UPA00109">
    <property type="reaction ID" value="UER00185"/>
</dbReference>
<dbReference type="Proteomes" id="UP000001473">
    <property type="component" value="Chromosome"/>
</dbReference>
<dbReference type="GO" id="GO:0005829">
    <property type="term" value="C:cytosol"/>
    <property type="evidence" value="ECO:0007669"/>
    <property type="project" value="TreeGrafter"/>
</dbReference>
<dbReference type="GO" id="GO:0043531">
    <property type="term" value="F:ADP binding"/>
    <property type="evidence" value="ECO:0007669"/>
    <property type="project" value="TreeGrafter"/>
</dbReference>
<dbReference type="GO" id="GO:0005524">
    <property type="term" value="F:ATP binding"/>
    <property type="evidence" value="ECO:0007669"/>
    <property type="project" value="UniProtKB-KW"/>
</dbReference>
<dbReference type="GO" id="GO:0004618">
    <property type="term" value="F:phosphoglycerate kinase activity"/>
    <property type="evidence" value="ECO:0007669"/>
    <property type="project" value="UniProtKB-UniRule"/>
</dbReference>
<dbReference type="GO" id="GO:0006094">
    <property type="term" value="P:gluconeogenesis"/>
    <property type="evidence" value="ECO:0007669"/>
    <property type="project" value="TreeGrafter"/>
</dbReference>
<dbReference type="GO" id="GO:0006096">
    <property type="term" value="P:glycolytic process"/>
    <property type="evidence" value="ECO:0007669"/>
    <property type="project" value="UniProtKB-UniRule"/>
</dbReference>
<dbReference type="CDD" id="cd00318">
    <property type="entry name" value="Phosphoglycerate_kinase"/>
    <property type="match status" value="1"/>
</dbReference>
<dbReference type="FunFam" id="3.40.50.1260:FF:000003">
    <property type="entry name" value="Phosphoglycerate kinase"/>
    <property type="match status" value="1"/>
</dbReference>
<dbReference type="FunFam" id="3.40.50.1260:FF:000006">
    <property type="entry name" value="Phosphoglycerate kinase"/>
    <property type="match status" value="1"/>
</dbReference>
<dbReference type="Gene3D" id="3.40.50.1260">
    <property type="entry name" value="Phosphoglycerate kinase, N-terminal domain"/>
    <property type="match status" value="2"/>
</dbReference>
<dbReference type="HAMAP" id="MF_00145">
    <property type="entry name" value="Phosphoglyc_kinase"/>
    <property type="match status" value="1"/>
</dbReference>
<dbReference type="InterPro" id="IPR001576">
    <property type="entry name" value="Phosphoglycerate_kinase"/>
</dbReference>
<dbReference type="InterPro" id="IPR015911">
    <property type="entry name" value="Phosphoglycerate_kinase_CS"/>
</dbReference>
<dbReference type="InterPro" id="IPR015824">
    <property type="entry name" value="Phosphoglycerate_kinase_N"/>
</dbReference>
<dbReference type="InterPro" id="IPR036043">
    <property type="entry name" value="Phosphoglycerate_kinase_sf"/>
</dbReference>
<dbReference type="PANTHER" id="PTHR11406">
    <property type="entry name" value="PHOSPHOGLYCERATE KINASE"/>
    <property type="match status" value="1"/>
</dbReference>
<dbReference type="PANTHER" id="PTHR11406:SF23">
    <property type="entry name" value="PHOSPHOGLYCERATE KINASE 1, CHLOROPLASTIC-RELATED"/>
    <property type="match status" value="1"/>
</dbReference>
<dbReference type="Pfam" id="PF00162">
    <property type="entry name" value="PGK"/>
    <property type="match status" value="1"/>
</dbReference>
<dbReference type="PIRSF" id="PIRSF000724">
    <property type="entry name" value="Pgk"/>
    <property type="match status" value="1"/>
</dbReference>
<dbReference type="PRINTS" id="PR00477">
    <property type="entry name" value="PHGLYCKINASE"/>
</dbReference>
<dbReference type="SUPFAM" id="SSF53748">
    <property type="entry name" value="Phosphoglycerate kinase"/>
    <property type="match status" value="1"/>
</dbReference>
<dbReference type="PROSITE" id="PS00111">
    <property type="entry name" value="PGLYCERATE_KINASE"/>
    <property type="match status" value="1"/>
</dbReference>
<organism>
    <name type="scientific">Corynebacterium kroppenstedtii (strain DSM 44385 / JCM 11950 / CIP 105744 / CCUG 35717)</name>
    <dbReference type="NCBI Taxonomy" id="645127"/>
    <lineage>
        <taxon>Bacteria</taxon>
        <taxon>Bacillati</taxon>
        <taxon>Actinomycetota</taxon>
        <taxon>Actinomycetes</taxon>
        <taxon>Mycobacteriales</taxon>
        <taxon>Corynebacteriaceae</taxon>
        <taxon>Corynebacterium</taxon>
    </lineage>
</organism>
<sequence length="403" mass="42648">MAVKKLADLLKEGVEGRHVLVRADLNVPLKDKVITDPGRIDASLPTIKALTEAGARVIVAAHLGRPKSPQDTQFSLAPVAEALSQRLDQYVALASDVSGEDAHERANGLNDGDVLLLENVRFDPREKSKNDAEREELASELAALTGDNGAFVSDGFGVVHRKQASVYDVAKKLPAYVGYLVEKELEQLSKCTDDPQHPYAVCLGGSKVSDKLGVIKALAPKVDTLIIGGGMCYTFLKAKGYGVGDSLLEESMIDECKNLLSEYSDKIVLPSDIVVGKEFDANTEHKTVSADGIEDGWMGLDTGAESIKTFGERLNGAKTIFWNGPVGVFEFEAFANGTKGLAEAIAEATKNGAFSVIGGGDSASAVRNLGFADEAFSHISTGGGASLELIEGKTLPGVAVLDR</sequence>
<accession>C4LIR6</accession>
<gene>
    <name evidence="1" type="primary">pgk</name>
    <name type="ordered locus">ckrop_0968</name>
</gene>
<keyword id="KW-0067">ATP-binding</keyword>
<keyword id="KW-0963">Cytoplasm</keyword>
<keyword id="KW-0324">Glycolysis</keyword>
<keyword id="KW-0418">Kinase</keyword>
<keyword id="KW-0547">Nucleotide-binding</keyword>
<keyword id="KW-1185">Reference proteome</keyword>
<keyword id="KW-0808">Transferase</keyword>
<comment type="catalytic activity">
    <reaction evidence="1">
        <text>(2R)-3-phosphoglycerate + ATP = (2R)-3-phospho-glyceroyl phosphate + ADP</text>
        <dbReference type="Rhea" id="RHEA:14801"/>
        <dbReference type="ChEBI" id="CHEBI:30616"/>
        <dbReference type="ChEBI" id="CHEBI:57604"/>
        <dbReference type="ChEBI" id="CHEBI:58272"/>
        <dbReference type="ChEBI" id="CHEBI:456216"/>
        <dbReference type="EC" id="2.7.2.3"/>
    </reaction>
</comment>
<comment type="pathway">
    <text evidence="1">Carbohydrate degradation; glycolysis; pyruvate from D-glyceraldehyde 3-phosphate: step 2/5.</text>
</comment>
<comment type="subunit">
    <text evidence="1">Monomer.</text>
</comment>
<comment type="subcellular location">
    <subcellularLocation>
        <location evidence="1">Cytoplasm</location>
    </subcellularLocation>
</comment>
<comment type="similarity">
    <text evidence="1">Belongs to the phosphoglycerate kinase family.</text>
</comment>
<protein>
    <recommendedName>
        <fullName evidence="1">Phosphoglycerate kinase</fullName>
        <ecNumber evidence="1">2.7.2.3</ecNumber>
    </recommendedName>
</protein>
<evidence type="ECO:0000255" key="1">
    <source>
        <dbReference type="HAMAP-Rule" id="MF_00145"/>
    </source>
</evidence>
<proteinExistence type="inferred from homology"/>